<protein>
    <recommendedName>
        <fullName>Guanine nucleotide-binding protein G(q) subunit alpha</fullName>
        <ecNumber evidence="1">3.6.5.-</ecNumber>
    </recommendedName>
    <alternativeName>
        <fullName>Guanine nucleotide-binding protein alpha-q</fullName>
    </alternativeName>
</protein>
<reference key="1">
    <citation type="submission" date="2000-02" db="EMBL/GenBank/DDBJ databases">
        <title>Rat G alpha q subunit.</title>
        <authorList>
            <person name="Strotmann R."/>
        </authorList>
    </citation>
    <scope>NUCLEOTIDE SEQUENCE [MRNA]</scope>
    <source>
        <tissue>Brain</tissue>
    </source>
</reference>
<reference key="2">
    <citation type="journal article" date="1992" name="Biol. Psychiatry">
        <title>Signal-transducing G proteins and antidepressant drugs: evidence for modulation of alpha subunit gene expression in rat brain.</title>
        <authorList>
            <person name="Lesch K.-P."/>
            <person name="Manji H.K."/>
        </authorList>
    </citation>
    <scope>NUCLEOTIDE SEQUENCE [MRNA] OF 80-235</scope>
    <source>
        <tissue>Brain cortex</tissue>
    </source>
</reference>
<reference key="3">
    <citation type="submission" date="1995-01" db="EMBL/GenBank/DDBJ databases">
        <title>GTP-binding protein expression in glomerular mesangial cells.</title>
        <authorList>
            <person name="Thomas C.P."/>
        </authorList>
    </citation>
    <scope>NUCLEOTIDE SEQUENCE [MRNA] OF 244-337</scope>
    <source>
        <strain>Sprague-Dawley</strain>
        <tissue>Kidney cortex</tissue>
    </source>
</reference>
<keyword id="KW-1003">Cell membrane</keyword>
<keyword id="KW-0333">Golgi apparatus</keyword>
<keyword id="KW-0342">GTP-binding</keyword>
<keyword id="KW-0378">Hydrolase</keyword>
<keyword id="KW-0449">Lipoprotein</keyword>
<keyword id="KW-0460">Magnesium</keyword>
<keyword id="KW-0472">Membrane</keyword>
<keyword id="KW-0479">Metal-binding</keyword>
<keyword id="KW-0547">Nucleotide-binding</keyword>
<keyword id="KW-0539">Nucleus</keyword>
<keyword id="KW-0564">Palmitate</keyword>
<keyword id="KW-1185">Reference proteome</keyword>
<keyword id="KW-0807">Transducer</keyword>
<comment type="function">
    <text evidence="1 2">Guanine nucleotide-binding proteins (G proteins) function as transducers downstream of G protein-coupled receptors (GPCRs) in numerous signaling cascades. The alpha chain contains the guanine nucleotide binding site and alternates between an active, GTP-bound state and an inactive, GDP-bound state. Signaling by an activated GPCR promotes GDP release and GTP binding. The alpha subunit has a low GTPase activity that converts bound GTP to GDP, thereby terminating the signal. Both GDP release and GTP hydrolysis are modulated by numerous regulatory proteins. Signaling is mediated via phospholipase C-beta-dependent inositol lipid hydrolysis for signal propagation: activates phospholipase C-beta: following GPCR activation, GNAQ activates PLC-beta (PLCB1, PLCB2, PLCB3 or PLCB4), leading to production of diacylglycerol (DAG) and inositol 1,4,5-trisphosphate (IP3). Required for platelet activation. Regulates B-cell selection and survival and is required to prevent B-cell-dependent autoimmunity. Regulates chemotaxis of BM-derived neutrophils and dendritic cells (in vitro) (By similarity). Transduces FFAR4 signaling in response to long-chain fatty acids (LCFAs) (By similarity). Together with GNA11, required for heart development (By similarity).</text>
</comment>
<comment type="catalytic activity">
    <reaction evidence="1">
        <text>GTP + H2O = GDP + phosphate + H(+)</text>
        <dbReference type="Rhea" id="RHEA:19669"/>
        <dbReference type="ChEBI" id="CHEBI:15377"/>
        <dbReference type="ChEBI" id="CHEBI:15378"/>
        <dbReference type="ChEBI" id="CHEBI:37565"/>
        <dbReference type="ChEBI" id="CHEBI:43474"/>
        <dbReference type="ChEBI" id="CHEBI:58189"/>
    </reaction>
    <physiologicalReaction direction="left-to-right" evidence="1">
        <dbReference type="Rhea" id="RHEA:19670"/>
    </physiologicalReaction>
</comment>
<comment type="subunit">
    <text evidence="2">G proteins are composed of 3 units; alpha, beta and gamma. The alpha chain contains the guanine nucleotide binding site. Interacts (GDP-bound form) with RIC8A (via C-terminus); promoting GNAQ folding and association with the plasma membrane. Binds NHERF1. Forms a complex with PECAM1 and BDKRB2. Interacts with GAS2L2.</text>
</comment>
<comment type="subcellular location">
    <subcellularLocation>
        <location evidence="2">Cell membrane</location>
        <topology evidence="2">Lipid-anchor</topology>
    </subcellularLocation>
    <subcellularLocation>
        <location evidence="2">Golgi apparatus</location>
    </subcellularLocation>
    <subcellularLocation>
        <location evidence="1">Nucleus</location>
    </subcellularLocation>
    <subcellularLocation>
        <location evidence="1">Nucleus membrane</location>
    </subcellularLocation>
    <text evidence="1">Colocalizes with the adrenergic receptors, ADREN1A and ADREN1B, at the nuclear membrane of cardiac myocytes.</text>
</comment>
<comment type="PTM">
    <text evidence="1">Palmitoylated by ZDHHC3 and ZDHHC7. Palmitoylation occurs in the Golgi and participates in the localization of GNAQ to the plasma membrane.</text>
</comment>
<comment type="PTM">
    <text evidence="1">Histaminylated at Gln-209 residues by TGM2.</text>
</comment>
<comment type="similarity">
    <text evidence="4">Belongs to the G-alpha family. G(q) subfamily.</text>
</comment>
<organism>
    <name type="scientific">Rattus norvegicus</name>
    <name type="common">Rat</name>
    <dbReference type="NCBI Taxonomy" id="10116"/>
    <lineage>
        <taxon>Eukaryota</taxon>
        <taxon>Metazoa</taxon>
        <taxon>Chordata</taxon>
        <taxon>Craniata</taxon>
        <taxon>Vertebrata</taxon>
        <taxon>Euteleostomi</taxon>
        <taxon>Mammalia</taxon>
        <taxon>Eutheria</taxon>
        <taxon>Euarchontoglires</taxon>
        <taxon>Glires</taxon>
        <taxon>Rodentia</taxon>
        <taxon>Myomorpha</taxon>
        <taxon>Muroidea</taxon>
        <taxon>Muridae</taxon>
        <taxon>Murinae</taxon>
        <taxon>Rattus</taxon>
    </lineage>
</organism>
<gene>
    <name type="primary">Gnaq</name>
</gene>
<proteinExistence type="evidence at transcript level"/>
<name>GNAQ_RAT</name>
<evidence type="ECO:0000250" key="1">
    <source>
        <dbReference type="UniProtKB" id="P21279"/>
    </source>
</evidence>
<evidence type="ECO:0000250" key="2">
    <source>
        <dbReference type="UniProtKB" id="P50148"/>
    </source>
</evidence>
<evidence type="ECO:0000255" key="3">
    <source>
        <dbReference type="PROSITE-ProRule" id="PRU01230"/>
    </source>
</evidence>
<evidence type="ECO:0000305" key="4"/>
<sequence>MTLESIMACCLSEEAKEARRINDEIERQLRRDKRDARRELKLLLLGTGESGKSTFIKQMRIIHGSGYSDEDKRGFTKLVYQNIFTAMQAMVRAMDTLKIPYKYEHNKAHAQLVREVDVEKVSAFENPYVDAIKSLWNDPGIQECYDRRREYQLSDSTKYYLNDLDRVADPSYLPTQQDVLRVRVPTTGIIEYPFDLQSVIFRMVDVGGQRSERRKWIHCFENVTSIMFLVALSEYDQVLVESDNENRMEESKALFRTIITYPWFQNSSVILFLNKKDLLEEKIMYSHLVDYFPEYDGPQRDAQAAREFILKMFVDLNPDSDKIIYSHFTCATDTENIRFVFAAVKDTILQLNLKEYNLV</sequence>
<feature type="chain" id="PRO_0000203762" description="Guanine nucleotide-binding protein G(q) subunit alpha">
    <location>
        <begin position="1"/>
        <end position="359"/>
    </location>
</feature>
<feature type="domain" description="G-alpha" evidence="3">
    <location>
        <begin position="38"/>
        <end position="359"/>
    </location>
</feature>
<feature type="region of interest" description="G1 motif" evidence="3">
    <location>
        <begin position="41"/>
        <end position="54"/>
    </location>
</feature>
<feature type="region of interest" description="G2 motif" evidence="3">
    <location>
        <begin position="178"/>
        <end position="186"/>
    </location>
</feature>
<feature type="region of interest" description="G3 motif" evidence="3">
    <location>
        <begin position="201"/>
        <end position="210"/>
    </location>
</feature>
<feature type="region of interest" description="G4 motif" evidence="3">
    <location>
        <begin position="270"/>
        <end position="277"/>
    </location>
</feature>
<feature type="region of interest" description="G5 motif" evidence="3">
    <location>
        <begin position="329"/>
        <end position="334"/>
    </location>
</feature>
<feature type="binding site" evidence="1">
    <location>
        <position position="50"/>
    </location>
    <ligand>
        <name>GTP</name>
        <dbReference type="ChEBI" id="CHEBI:37565"/>
    </ligand>
</feature>
<feature type="binding site" evidence="1">
    <location>
        <position position="51"/>
    </location>
    <ligand>
        <name>GTP</name>
        <dbReference type="ChEBI" id="CHEBI:37565"/>
    </ligand>
</feature>
<feature type="binding site" evidence="1">
    <location>
        <position position="52"/>
    </location>
    <ligand>
        <name>GTP</name>
        <dbReference type="ChEBI" id="CHEBI:37565"/>
    </ligand>
</feature>
<feature type="binding site" evidence="1">
    <location>
        <position position="53"/>
    </location>
    <ligand>
        <name>GTP</name>
        <dbReference type="ChEBI" id="CHEBI:37565"/>
    </ligand>
</feature>
<feature type="binding site" evidence="1">
    <location>
        <position position="53"/>
    </location>
    <ligand>
        <name>Mg(2+)</name>
        <dbReference type="ChEBI" id="CHEBI:18420"/>
    </ligand>
</feature>
<feature type="binding site" evidence="1">
    <location>
        <position position="54"/>
    </location>
    <ligand>
        <name>GTP</name>
        <dbReference type="ChEBI" id="CHEBI:37565"/>
    </ligand>
</feature>
<feature type="binding site" evidence="1">
    <location>
        <position position="156"/>
    </location>
    <ligand>
        <name>GTP</name>
        <dbReference type="ChEBI" id="CHEBI:37565"/>
    </ligand>
</feature>
<feature type="binding site" evidence="1">
    <location>
        <position position="180"/>
    </location>
    <ligand>
        <name>GTP</name>
        <dbReference type="ChEBI" id="CHEBI:37565"/>
    </ligand>
</feature>
<feature type="binding site" evidence="1">
    <location>
        <position position="181"/>
    </location>
    <ligand>
        <name>GTP</name>
        <dbReference type="ChEBI" id="CHEBI:37565"/>
    </ligand>
</feature>
<feature type="binding site" evidence="1">
    <location>
        <position position="183"/>
    </location>
    <ligand>
        <name>GTP</name>
        <dbReference type="ChEBI" id="CHEBI:37565"/>
    </ligand>
</feature>
<feature type="binding site" evidence="1">
    <location>
        <position position="186"/>
    </location>
    <ligand>
        <name>Mg(2+)</name>
        <dbReference type="ChEBI" id="CHEBI:18420"/>
    </ligand>
</feature>
<feature type="binding site" evidence="1">
    <location>
        <position position="274"/>
    </location>
    <ligand>
        <name>GTP</name>
        <dbReference type="ChEBI" id="CHEBI:37565"/>
    </ligand>
</feature>
<feature type="binding site" evidence="1">
    <location>
        <position position="275"/>
    </location>
    <ligand>
        <name>GTP</name>
        <dbReference type="ChEBI" id="CHEBI:37565"/>
    </ligand>
</feature>
<feature type="binding site" evidence="1">
    <location>
        <position position="277"/>
    </location>
    <ligand>
        <name>GTP</name>
        <dbReference type="ChEBI" id="CHEBI:37565"/>
    </ligand>
</feature>
<feature type="binding site" evidence="1">
    <location>
        <position position="331"/>
    </location>
    <ligand>
        <name>GTP</name>
        <dbReference type="ChEBI" id="CHEBI:37565"/>
    </ligand>
</feature>
<feature type="modified residue" description="5-glutamyl histamine" evidence="1">
    <location>
        <position position="209"/>
    </location>
</feature>
<feature type="lipid moiety-binding region" description="S-palmitoyl cysteine" evidence="1">
    <location>
        <position position="9"/>
    </location>
</feature>
<feature type="lipid moiety-binding region" description="S-palmitoyl cysteine" evidence="1">
    <location>
        <position position="10"/>
    </location>
</feature>
<feature type="sequence conflict" description="In Ref. 2." evidence="4" ref="2">
    <original>V</original>
    <variation>I</variation>
    <location>
        <position position="91"/>
    </location>
</feature>
<dbReference type="EC" id="3.6.5.-" evidence="1"/>
<dbReference type="EMBL" id="AF234260">
    <property type="protein sequence ID" value="AAF59930.1"/>
    <property type="molecule type" value="mRNA"/>
</dbReference>
<dbReference type="EMBL" id="L37294">
    <property type="protein sequence ID" value="AAB02848.1"/>
    <property type="molecule type" value="mRNA"/>
</dbReference>
<dbReference type="RefSeq" id="NP_112298.1">
    <property type="nucleotide sequence ID" value="NM_031036.1"/>
</dbReference>
<dbReference type="SMR" id="P82471"/>
<dbReference type="BioGRID" id="249565">
    <property type="interactions" value="4"/>
</dbReference>
<dbReference type="CORUM" id="P82471"/>
<dbReference type="FunCoup" id="P82471">
    <property type="interactions" value="3059"/>
</dbReference>
<dbReference type="IntAct" id="P82471">
    <property type="interactions" value="1"/>
</dbReference>
<dbReference type="MINT" id="P82471"/>
<dbReference type="STRING" id="10116.ENSRNOP00000019174"/>
<dbReference type="GlyGen" id="P82471">
    <property type="glycosylation" value="1 site, 1 O-linked glycan (1 site)"/>
</dbReference>
<dbReference type="iPTMnet" id="P82471"/>
<dbReference type="PhosphoSitePlus" id="P82471"/>
<dbReference type="SwissPalm" id="P82471"/>
<dbReference type="jPOST" id="P82471"/>
<dbReference type="PaxDb" id="10116-ENSRNOP00000019174"/>
<dbReference type="GeneID" id="81666"/>
<dbReference type="KEGG" id="rno:81666"/>
<dbReference type="UCSC" id="RGD:620770">
    <property type="organism name" value="rat"/>
</dbReference>
<dbReference type="AGR" id="RGD:620770"/>
<dbReference type="CTD" id="2776"/>
<dbReference type="RGD" id="620770">
    <property type="gene designation" value="Gnaq"/>
</dbReference>
<dbReference type="eggNOG" id="KOG0085">
    <property type="taxonomic scope" value="Eukaryota"/>
</dbReference>
<dbReference type="InParanoid" id="P82471"/>
<dbReference type="OrthoDB" id="6501776at2759"/>
<dbReference type="PhylomeDB" id="P82471"/>
<dbReference type="Reactome" id="R-RNO-112043">
    <property type="pathway name" value="PLC beta mediated events"/>
</dbReference>
<dbReference type="Reactome" id="R-RNO-202040">
    <property type="pathway name" value="G-protein activation"/>
</dbReference>
<dbReference type="Reactome" id="R-RNO-399997">
    <property type="pathway name" value="Acetylcholine regulates insulin secretion"/>
</dbReference>
<dbReference type="Reactome" id="R-RNO-416476">
    <property type="pathway name" value="G alpha (q) signalling events"/>
</dbReference>
<dbReference type="Reactome" id="R-RNO-418592">
    <property type="pathway name" value="ADP signalling through P2Y purinoceptor 1"/>
</dbReference>
<dbReference type="Reactome" id="R-RNO-428930">
    <property type="pathway name" value="Thromboxane signalling through TP receptor"/>
</dbReference>
<dbReference type="Reactome" id="R-RNO-434316">
    <property type="pathway name" value="Fatty Acids bound to GPR40 (FFAR1) regulate insulin secretion"/>
</dbReference>
<dbReference type="Reactome" id="R-RNO-456926">
    <property type="pathway name" value="Thrombin signalling through proteinase activated receptors (PARs)"/>
</dbReference>
<dbReference type="Reactome" id="R-RNO-9856530">
    <property type="pathway name" value="High laminar flow shear stress activates signaling by PIEZO1 and PECAM1:CDH5:KDR in endothelial cells"/>
</dbReference>
<dbReference type="PRO" id="PR:P82471"/>
<dbReference type="Proteomes" id="UP000002494">
    <property type="component" value="Unplaced"/>
</dbReference>
<dbReference type="GO" id="GO:0005901">
    <property type="term" value="C:caveola"/>
    <property type="evidence" value="ECO:0000314"/>
    <property type="project" value="RGD"/>
</dbReference>
<dbReference type="GO" id="GO:0044297">
    <property type="term" value="C:cell body"/>
    <property type="evidence" value="ECO:0000266"/>
    <property type="project" value="RGD"/>
</dbReference>
<dbReference type="GO" id="GO:0005737">
    <property type="term" value="C:cytoplasm"/>
    <property type="evidence" value="ECO:0000318"/>
    <property type="project" value="GO_Central"/>
</dbReference>
<dbReference type="GO" id="GO:0030425">
    <property type="term" value="C:dendrite"/>
    <property type="evidence" value="ECO:0000266"/>
    <property type="project" value="RGD"/>
</dbReference>
<dbReference type="GO" id="GO:0005794">
    <property type="term" value="C:Golgi apparatus"/>
    <property type="evidence" value="ECO:0007669"/>
    <property type="project" value="UniProtKB-SubCell"/>
</dbReference>
<dbReference type="GO" id="GO:0005834">
    <property type="term" value="C:heterotrimeric G-protein complex"/>
    <property type="evidence" value="ECO:0000314"/>
    <property type="project" value="MGI"/>
</dbReference>
<dbReference type="GO" id="GO:0016020">
    <property type="term" value="C:membrane"/>
    <property type="evidence" value="ECO:0000266"/>
    <property type="project" value="RGD"/>
</dbReference>
<dbReference type="GO" id="GO:0031965">
    <property type="term" value="C:nuclear membrane"/>
    <property type="evidence" value="ECO:0007669"/>
    <property type="project" value="UniProtKB-SubCell"/>
</dbReference>
<dbReference type="GO" id="GO:0005886">
    <property type="term" value="C:plasma membrane"/>
    <property type="evidence" value="ECO:0000266"/>
    <property type="project" value="RGD"/>
</dbReference>
<dbReference type="GO" id="GO:0099524">
    <property type="term" value="C:postsynaptic cytosol"/>
    <property type="evidence" value="ECO:0000266"/>
    <property type="project" value="RGD"/>
</dbReference>
<dbReference type="GO" id="GO:0098793">
    <property type="term" value="C:presynapse"/>
    <property type="evidence" value="ECO:0000314"/>
    <property type="project" value="SynGO"/>
</dbReference>
<dbReference type="GO" id="GO:0047391">
    <property type="term" value="F:alkylglycerophosphoethanolamine phosphodiesterase activity"/>
    <property type="evidence" value="ECO:0000314"/>
    <property type="project" value="MGI"/>
</dbReference>
<dbReference type="GO" id="GO:0030234">
    <property type="term" value="F:enzyme regulator activity"/>
    <property type="evidence" value="ECO:0000266"/>
    <property type="project" value="RGD"/>
</dbReference>
<dbReference type="GO" id="GO:0003925">
    <property type="term" value="F:G protein activity"/>
    <property type="evidence" value="ECO:0000266"/>
    <property type="project" value="RGD"/>
</dbReference>
<dbReference type="GO" id="GO:0001664">
    <property type="term" value="F:G protein-coupled receptor binding"/>
    <property type="evidence" value="ECO:0000318"/>
    <property type="project" value="GO_Central"/>
</dbReference>
<dbReference type="GO" id="GO:0031683">
    <property type="term" value="F:G-protein beta/gamma-subunit complex binding"/>
    <property type="evidence" value="ECO:0000318"/>
    <property type="project" value="GO_Central"/>
</dbReference>
<dbReference type="GO" id="GO:0005525">
    <property type="term" value="F:GTP binding"/>
    <property type="evidence" value="ECO:0007669"/>
    <property type="project" value="UniProtKB-KW"/>
</dbReference>
<dbReference type="GO" id="GO:0005096">
    <property type="term" value="F:GTPase activator activity"/>
    <property type="evidence" value="ECO:0000266"/>
    <property type="project" value="RGD"/>
</dbReference>
<dbReference type="GO" id="GO:0003924">
    <property type="term" value="F:GTPase activity"/>
    <property type="evidence" value="ECO:0000318"/>
    <property type="project" value="GO_Central"/>
</dbReference>
<dbReference type="GO" id="GO:0046872">
    <property type="term" value="F:metal ion binding"/>
    <property type="evidence" value="ECO:0007669"/>
    <property type="project" value="UniProtKB-KW"/>
</dbReference>
<dbReference type="GO" id="GO:0044877">
    <property type="term" value="F:protein-containing complex binding"/>
    <property type="evidence" value="ECO:0000353"/>
    <property type="project" value="RGD"/>
</dbReference>
<dbReference type="GO" id="GO:0001508">
    <property type="term" value="P:action potential"/>
    <property type="evidence" value="ECO:0000266"/>
    <property type="project" value="RGD"/>
</dbReference>
<dbReference type="GO" id="GO:0007189">
    <property type="term" value="P:adenylate cyclase-activating G protein-coupled receptor signaling pathway"/>
    <property type="evidence" value="ECO:0000266"/>
    <property type="project" value="RGD"/>
</dbReference>
<dbReference type="GO" id="GO:1904888">
    <property type="term" value="P:cranial skeletal system development"/>
    <property type="evidence" value="ECO:0000266"/>
    <property type="project" value="RGD"/>
</dbReference>
<dbReference type="GO" id="GO:0048066">
    <property type="term" value="P:developmental pigmentation"/>
    <property type="evidence" value="ECO:0000266"/>
    <property type="project" value="RGD"/>
</dbReference>
<dbReference type="GO" id="GO:0042733">
    <property type="term" value="P:embryonic digit morphogenesis"/>
    <property type="evidence" value="ECO:0000266"/>
    <property type="project" value="RGD"/>
</dbReference>
<dbReference type="GO" id="GO:0086100">
    <property type="term" value="P:endothelin receptor signaling pathway"/>
    <property type="evidence" value="ECO:0000266"/>
    <property type="project" value="RGD"/>
</dbReference>
<dbReference type="GO" id="GO:0021884">
    <property type="term" value="P:forebrain neuron development"/>
    <property type="evidence" value="ECO:0000266"/>
    <property type="project" value="RGD"/>
</dbReference>
<dbReference type="GO" id="GO:0007186">
    <property type="term" value="P:G protein-coupled receptor signaling pathway"/>
    <property type="evidence" value="ECO:0000266"/>
    <property type="project" value="RGD"/>
</dbReference>
<dbReference type="GO" id="GO:0007215">
    <property type="term" value="P:glutamate receptor signaling pathway"/>
    <property type="evidence" value="ECO:0000266"/>
    <property type="project" value="RGD"/>
</dbReference>
<dbReference type="GO" id="GO:0007507">
    <property type="term" value="P:heart development"/>
    <property type="evidence" value="ECO:0000266"/>
    <property type="project" value="RGD"/>
</dbReference>
<dbReference type="GO" id="GO:1990806">
    <property type="term" value="P:ligand-gated ion channel signaling pathway"/>
    <property type="evidence" value="ECO:0000266"/>
    <property type="project" value="RGD"/>
</dbReference>
<dbReference type="GO" id="GO:0042711">
    <property type="term" value="P:maternal behavior"/>
    <property type="evidence" value="ECO:0000266"/>
    <property type="project" value="RGD"/>
</dbReference>
<dbReference type="GO" id="GO:0043066">
    <property type="term" value="P:negative regulation of apoptotic process"/>
    <property type="evidence" value="ECO:0000315"/>
    <property type="project" value="RGD"/>
</dbReference>
<dbReference type="GO" id="GO:0043267">
    <property type="term" value="P:negative regulation of potassium ion transport"/>
    <property type="evidence" value="ECO:0000315"/>
    <property type="project" value="RGD"/>
</dbReference>
<dbReference type="GO" id="GO:0016322">
    <property type="term" value="P:neuron remodeling"/>
    <property type="evidence" value="ECO:0000266"/>
    <property type="project" value="RGD"/>
</dbReference>
<dbReference type="GO" id="GO:0007218">
    <property type="term" value="P:neuropeptide signaling pathway"/>
    <property type="evidence" value="ECO:0000266"/>
    <property type="project" value="RGD"/>
</dbReference>
<dbReference type="GO" id="GO:0060158">
    <property type="term" value="P:phospholipase C-activating dopamine receptor signaling pathway"/>
    <property type="evidence" value="ECO:0000266"/>
    <property type="project" value="RGD"/>
</dbReference>
<dbReference type="GO" id="GO:0007207">
    <property type="term" value="P:phospholipase C-activating G protein-coupled acetylcholine receptor signaling pathway"/>
    <property type="evidence" value="ECO:0000266"/>
    <property type="project" value="RGD"/>
</dbReference>
<dbReference type="GO" id="GO:0007206">
    <property type="term" value="P:phospholipase C-activating G protein-coupled glutamate receptor signaling pathway"/>
    <property type="evidence" value="ECO:0000266"/>
    <property type="project" value="RGD"/>
</dbReference>
<dbReference type="GO" id="GO:0007200">
    <property type="term" value="P:phospholipase C-activating G protein-coupled receptor signaling pathway"/>
    <property type="evidence" value="ECO:0000315"/>
    <property type="project" value="RGD"/>
</dbReference>
<dbReference type="GO" id="GO:0007208">
    <property type="term" value="P:phospholipase C-activating serotonin receptor signaling pathway"/>
    <property type="evidence" value="ECO:0000266"/>
    <property type="project" value="RGD"/>
</dbReference>
<dbReference type="GO" id="GO:0032024">
    <property type="term" value="P:positive regulation of insulin secretion"/>
    <property type="evidence" value="ECO:0000266"/>
    <property type="project" value="RGD"/>
</dbReference>
<dbReference type="GO" id="GO:0009791">
    <property type="term" value="P:post-embryonic development"/>
    <property type="evidence" value="ECO:0000266"/>
    <property type="project" value="RGD"/>
</dbReference>
<dbReference type="GO" id="GO:0050821">
    <property type="term" value="P:protein stabilization"/>
    <property type="evidence" value="ECO:0000266"/>
    <property type="project" value="RGD"/>
</dbReference>
<dbReference type="GO" id="GO:0008217">
    <property type="term" value="P:regulation of blood pressure"/>
    <property type="evidence" value="ECO:0000266"/>
    <property type="project" value="RGD"/>
</dbReference>
<dbReference type="GO" id="GO:0060828">
    <property type="term" value="P:regulation of canonical Wnt signaling pathway"/>
    <property type="evidence" value="ECO:0000266"/>
    <property type="project" value="RGD"/>
</dbReference>
<dbReference type="GO" id="GO:0045634">
    <property type="term" value="P:regulation of melanocyte differentiation"/>
    <property type="evidence" value="ECO:0000266"/>
    <property type="project" value="RGD"/>
</dbReference>
<dbReference type="GO" id="GO:0010543">
    <property type="term" value="P:regulation of platelet activation"/>
    <property type="evidence" value="ECO:0000250"/>
    <property type="project" value="UniProtKB"/>
</dbReference>
<dbReference type="GO" id="GO:0034695">
    <property type="term" value="P:response to prostaglandin E"/>
    <property type="evidence" value="ECO:0000266"/>
    <property type="project" value="RGD"/>
</dbReference>
<dbReference type="GO" id="GO:0001501">
    <property type="term" value="P:skeletal system development"/>
    <property type="evidence" value="ECO:0000266"/>
    <property type="project" value="RGD"/>
</dbReference>
<dbReference type="CDD" id="cd00066">
    <property type="entry name" value="G-alpha"/>
    <property type="match status" value="1"/>
</dbReference>
<dbReference type="FunFam" id="3.40.50.300:FF:003977">
    <property type="entry name" value="Guanine nucleotide-binding protein G(q) subunit alpha"/>
    <property type="match status" value="1"/>
</dbReference>
<dbReference type="FunFam" id="1.10.400.10:FF:000002">
    <property type="entry name" value="guanine nucleotide-binding protein G(Q) subunit alpha"/>
    <property type="match status" value="1"/>
</dbReference>
<dbReference type="FunFam" id="3.40.50.300:FF:000692">
    <property type="entry name" value="Guanine nucleotide-binding protein subunit alpha"/>
    <property type="match status" value="1"/>
</dbReference>
<dbReference type="Gene3D" id="1.10.400.10">
    <property type="entry name" value="GI Alpha 1, domain 2-like"/>
    <property type="match status" value="1"/>
</dbReference>
<dbReference type="Gene3D" id="3.40.50.300">
    <property type="entry name" value="P-loop containing nucleotide triphosphate hydrolases"/>
    <property type="match status" value="1"/>
</dbReference>
<dbReference type="InterPro" id="IPR000654">
    <property type="entry name" value="Gprotein_alpha_Q"/>
</dbReference>
<dbReference type="InterPro" id="IPR001019">
    <property type="entry name" value="Gprotein_alpha_su"/>
</dbReference>
<dbReference type="InterPro" id="IPR011025">
    <property type="entry name" value="GproteinA_insert"/>
</dbReference>
<dbReference type="InterPro" id="IPR027417">
    <property type="entry name" value="P-loop_NTPase"/>
</dbReference>
<dbReference type="PANTHER" id="PTHR10218">
    <property type="entry name" value="GTP-BINDING PROTEIN ALPHA SUBUNIT"/>
    <property type="match status" value="1"/>
</dbReference>
<dbReference type="PANTHER" id="PTHR10218:SF329">
    <property type="entry name" value="GUANINE NUCLEOTIDE-BINDING PROTEIN G(Q) SUBUNIT ALPHA"/>
    <property type="match status" value="1"/>
</dbReference>
<dbReference type="Pfam" id="PF00503">
    <property type="entry name" value="G-alpha"/>
    <property type="match status" value="1"/>
</dbReference>
<dbReference type="PRINTS" id="PR00318">
    <property type="entry name" value="GPROTEINA"/>
</dbReference>
<dbReference type="PRINTS" id="PR00442">
    <property type="entry name" value="GPROTEINAQ"/>
</dbReference>
<dbReference type="SMART" id="SM00275">
    <property type="entry name" value="G_alpha"/>
    <property type="match status" value="1"/>
</dbReference>
<dbReference type="SUPFAM" id="SSF52540">
    <property type="entry name" value="P-loop containing nucleoside triphosphate hydrolases"/>
    <property type="match status" value="1"/>
</dbReference>
<dbReference type="SUPFAM" id="SSF47895">
    <property type="entry name" value="Transducin (alpha subunit), insertion domain"/>
    <property type="match status" value="1"/>
</dbReference>
<dbReference type="PROSITE" id="PS51882">
    <property type="entry name" value="G_ALPHA"/>
    <property type="match status" value="1"/>
</dbReference>
<accession>P82471</accession>